<feature type="chain" id="PRO_0000264109" description="Peptidyl-tRNA hydrolase">
    <location>
        <begin position="1"/>
        <end position="248"/>
    </location>
</feature>
<feature type="region of interest" description="Disordered" evidence="2">
    <location>
        <begin position="190"/>
        <end position="248"/>
    </location>
</feature>
<feature type="compositionally biased region" description="Low complexity" evidence="2">
    <location>
        <begin position="212"/>
        <end position="226"/>
    </location>
</feature>
<feature type="active site" description="Proton acceptor" evidence="1">
    <location>
        <position position="19"/>
    </location>
</feature>
<feature type="binding site" evidence="1">
    <location>
        <position position="14"/>
    </location>
    <ligand>
        <name>tRNA</name>
        <dbReference type="ChEBI" id="CHEBI:17843"/>
    </ligand>
</feature>
<feature type="binding site" evidence="1">
    <location>
        <position position="64"/>
    </location>
    <ligand>
        <name>tRNA</name>
        <dbReference type="ChEBI" id="CHEBI:17843"/>
    </ligand>
</feature>
<feature type="binding site" evidence="1">
    <location>
        <position position="66"/>
    </location>
    <ligand>
        <name>tRNA</name>
        <dbReference type="ChEBI" id="CHEBI:17843"/>
    </ligand>
</feature>
<feature type="binding site" evidence="1">
    <location>
        <position position="112"/>
    </location>
    <ligand>
        <name>tRNA</name>
        <dbReference type="ChEBI" id="CHEBI:17843"/>
    </ligand>
</feature>
<feature type="site" description="Discriminates between blocked and unblocked aminoacyl-tRNA" evidence="1">
    <location>
        <position position="9"/>
    </location>
</feature>
<feature type="site" description="Stabilizes the basic form of H active site to accept a proton" evidence="1">
    <location>
        <position position="91"/>
    </location>
</feature>
<proteinExistence type="inferred from homology"/>
<organism>
    <name type="scientific">Ruegeria sp. (strain TM1040)</name>
    <name type="common">Silicibacter sp.</name>
    <dbReference type="NCBI Taxonomy" id="292414"/>
    <lineage>
        <taxon>Bacteria</taxon>
        <taxon>Pseudomonadati</taxon>
        <taxon>Pseudomonadota</taxon>
        <taxon>Alphaproteobacteria</taxon>
        <taxon>Rhodobacterales</taxon>
        <taxon>Roseobacteraceae</taxon>
        <taxon>Ruegeria</taxon>
    </lineage>
</organism>
<sequence>MKLFVGLGNPGAKYAGNRHNIGFMALDQIASDHGFSPWKSKFQAQMSEGTLSGEKVILLKPQTFMNNSGQSVGEALRFFKLTPADVVVFHDELDLAPSKCRVKNGGGHAGHNGLRSIHAHIGADYGRVRLGVGHPGHKDAVAGYVLRDFPKADQGWLDDLMRGLSDGAAALATGDSGRFMNAVALRVAPPRSSTGEASKGRKKAQKSEPGVAKTPAKAATPEAPAAGDIPAAPEDSRSPMQKLLDKFK</sequence>
<reference key="1">
    <citation type="submission" date="2006-05" db="EMBL/GenBank/DDBJ databases">
        <title>Complete sequence of chromosome of Silicibacter sp. TM1040.</title>
        <authorList>
            <consortium name="US DOE Joint Genome Institute"/>
            <person name="Copeland A."/>
            <person name="Lucas S."/>
            <person name="Lapidus A."/>
            <person name="Barry K."/>
            <person name="Detter J.C."/>
            <person name="Glavina del Rio T."/>
            <person name="Hammon N."/>
            <person name="Israni S."/>
            <person name="Dalin E."/>
            <person name="Tice H."/>
            <person name="Pitluck S."/>
            <person name="Brettin T."/>
            <person name="Bruce D."/>
            <person name="Han C."/>
            <person name="Tapia R."/>
            <person name="Goodwin L."/>
            <person name="Thompson L.S."/>
            <person name="Gilna P."/>
            <person name="Schmutz J."/>
            <person name="Larimer F."/>
            <person name="Land M."/>
            <person name="Hauser L."/>
            <person name="Kyrpides N."/>
            <person name="Kim E."/>
            <person name="Belas R."/>
            <person name="Moran M.A."/>
            <person name="Buchan A."/>
            <person name="Gonzalez J.M."/>
            <person name="Schell M.A."/>
            <person name="Sun F."/>
            <person name="Richardson P."/>
        </authorList>
    </citation>
    <scope>NUCLEOTIDE SEQUENCE [LARGE SCALE GENOMIC DNA]</scope>
    <source>
        <strain>TM1040</strain>
    </source>
</reference>
<protein>
    <recommendedName>
        <fullName evidence="1">Peptidyl-tRNA hydrolase</fullName>
        <shortName evidence="1">Pth</shortName>
        <ecNumber evidence="1">3.1.1.29</ecNumber>
    </recommendedName>
</protein>
<gene>
    <name evidence="1" type="primary">pth</name>
    <name type="ordered locus">TM1040_0214</name>
</gene>
<dbReference type="EC" id="3.1.1.29" evidence="1"/>
<dbReference type="EMBL" id="CP000377">
    <property type="protein sequence ID" value="ABF62947.1"/>
    <property type="molecule type" value="Genomic_DNA"/>
</dbReference>
<dbReference type="RefSeq" id="WP_011537581.1">
    <property type="nucleotide sequence ID" value="NC_008044.1"/>
</dbReference>
<dbReference type="SMR" id="Q1GK69"/>
<dbReference type="STRING" id="292414.TM1040_0214"/>
<dbReference type="KEGG" id="sit:TM1040_0214"/>
<dbReference type="eggNOG" id="COG0193">
    <property type="taxonomic scope" value="Bacteria"/>
</dbReference>
<dbReference type="HOGENOM" id="CLU_062456_1_0_5"/>
<dbReference type="OrthoDB" id="9800507at2"/>
<dbReference type="Proteomes" id="UP000000636">
    <property type="component" value="Chromosome"/>
</dbReference>
<dbReference type="GO" id="GO:0005737">
    <property type="term" value="C:cytoplasm"/>
    <property type="evidence" value="ECO:0007669"/>
    <property type="project" value="UniProtKB-SubCell"/>
</dbReference>
<dbReference type="GO" id="GO:0004045">
    <property type="term" value="F:peptidyl-tRNA hydrolase activity"/>
    <property type="evidence" value="ECO:0007669"/>
    <property type="project" value="UniProtKB-UniRule"/>
</dbReference>
<dbReference type="GO" id="GO:0000049">
    <property type="term" value="F:tRNA binding"/>
    <property type="evidence" value="ECO:0007669"/>
    <property type="project" value="UniProtKB-UniRule"/>
</dbReference>
<dbReference type="GO" id="GO:0006515">
    <property type="term" value="P:protein quality control for misfolded or incompletely synthesized proteins"/>
    <property type="evidence" value="ECO:0007669"/>
    <property type="project" value="UniProtKB-UniRule"/>
</dbReference>
<dbReference type="GO" id="GO:0072344">
    <property type="term" value="P:rescue of stalled ribosome"/>
    <property type="evidence" value="ECO:0007669"/>
    <property type="project" value="UniProtKB-UniRule"/>
</dbReference>
<dbReference type="CDD" id="cd00462">
    <property type="entry name" value="PTH"/>
    <property type="match status" value="1"/>
</dbReference>
<dbReference type="FunFam" id="3.40.50.1470:FF:000001">
    <property type="entry name" value="Peptidyl-tRNA hydrolase"/>
    <property type="match status" value="1"/>
</dbReference>
<dbReference type="Gene3D" id="3.40.50.1470">
    <property type="entry name" value="Peptidyl-tRNA hydrolase"/>
    <property type="match status" value="1"/>
</dbReference>
<dbReference type="HAMAP" id="MF_00083">
    <property type="entry name" value="Pept_tRNA_hydro_bact"/>
    <property type="match status" value="1"/>
</dbReference>
<dbReference type="InterPro" id="IPR001328">
    <property type="entry name" value="Pept_tRNA_hydro"/>
</dbReference>
<dbReference type="InterPro" id="IPR018171">
    <property type="entry name" value="Pept_tRNA_hydro_CS"/>
</dbReference>
<dbReference type="InterPro" id="IPR036416">
    <property type="entry name" value="Pept_tRNA_hydro_sf"/>
</dbReference>
<dbReference type="NCBIfam" id="TIGR00447">
    <property type="entry name" value="pth"/>
    <property type="match status" value="1"/>
</dbReference>
<dbReference type="PANTHER" id="PTHR17224">
    <property type="entry name" value="PEPTIDYL-TRNA HYDROLASE"/>
    <property type="match status" value="1"/>
</dbReference>
<dbReference type="PANTHER" id="PTHR17224:SF1">
    <property type="entry name" value="PEPTIDYL-TRNA HYDROLASE"/>
    <property type="match status" value="1"/>
</dbReference>
<dbReference type="Pfam" id="PF01195">
    <property type="entry name" value="Pept_tRNA_hydro"/>
    <property type="match status" value="1"/>
</dbReference>
<dbReference type="SUPFAM" id="SSF53178">
    <property type="entry name" value="Peptidyl-tRNA hydrolase-like"/>
    <property type="match status" value="1"/>
</dbReference>
<dbReference type="PROSITE" id="PS01195">
    <property type="entry name" value="PEPT_TRNA_HYDROL_1"/>
    <property type="match status" value="1"/>
</dbReference>
<dbReference type="PROSITE" id="PS01196">
    <property type="entry name" value="PEPT_TRNA_HYDROL_2"/>
    <property type="match status" value="1"/>
</dbReference>
<keyword id="KW-0963">Cytoplasm</keyword>
<keyword id="KW-0378">Hydrolase</keyword>
<keyword id="KW-1185">Reference proteome</keyword>
<keyword id="KW-0694">RNA-binding</keyword>
<keyword id="KW-0820">tRNA-binding</keyword>
<comment type="function">
    <text evidence="1">Hydrolyzes ribosome-free peptidyl-tRNAs (with 1 or more amino acids incorporated), which drop off the ribosome during protein synthesis, or as a result of ribosome stalling.</text>
</comment>
<comment type="function">
    <text evidence="1">Catalyzes the release of premature peptidyl moieties from peptidyl-tRNA molecules trapped in stalled 50S ribosomal subunits, and thus maintains levels of free tRNAs and 50S ribosomes.</text>
</comment>
<comment type="catalytic activity">
    <reaction evidence="1">
        <text>an N-acyl-L-alpha-aminoacyl-tRNA + H2O = an N-acyl-L-amino acid + a tRNA + H(+)</text>
        <dbReference type="Rhea" id="RHEA:54448"/>
        <dbReference type="Rhea" id="RHEA-COMP:10123"/>
        <dbReference type="Rhea" id="RHEA-COMP:13883"/>
        <dbReference type="ChEBI" id="CHEBI:15377"/>
        <dbReference type="ChEBI" id="CHEBI:15378"/>
        <dbReference type="ChEBI" id="CHEBI:59874"/>
        <dbReference type="ChEBI" id="CHEBI:78442"/>
        <dbReference type="ChEBI" id="CHEBI:138191"/>
        <dbReference type="EC" id="3.1.1.29"/>
    </reaction>
</comment>
<comment type="subunit">
    <text evidence="1">Monomer.</text>
</comment>
<comment type="subcellular location">
    <subcellularLocation>
        <location evidence="1">Cytoplasm</location>
    </subcellularLocation>
</comment>
<comment type="similarity">
    <text evidence="1">Belongs to the PTH family.</text>
</comment>
<name>PTH_RUEST</name>
<evidence type="ECO:0000255" key="1">
    <source>
        <dbReference type="HAMAP-Rule" id="MF_00083"/>
    </source>
</evidence>
<evidence type="ECO:0000256" key="2">
    <source>
        <dbReference type="SAM" id="MobiDB-lite"/>
    </source>
</evidence>
<accession>Q1GK69</accession>